<accession>A8FQ85</accession>
<protein>
    <recommendedName>
        <fullName evidence="1">3-isopropylmalate dehydratase large subunit</fullName>
        <ecNumber evidence="1">4.2.1.33</ecNumber>
    </recommendedName>
    <alternativeName>
        <fullName evidence="1">Alpha-IPM isomerase</fullName>
        <shortName evidence="1">IPMI</shortName>
    </alternativeName>
    <alternativeName>
        <fullName evidence="1">Isopropylmalate isomerase</fullName>
    </alternativeName>
</protein>
<evidence type="ECO:0000255" key="1">
    <source>
        <dbReference type="HAMAP-Rule" id="MF_01026"/>
    </source>
</evidence>
<dbReference type="EC" id="4.2.1.33" evidence="1"/>
<dbReference type="EMBL" id="CP000821">
    <property type="protein sequence ID" value="ABV35008.1"/>
    <property type="molecule type" value="Genomic_DNA"/>
</dbReference>
<dbReference type="RefSeq" id="WP_012140745.1">
    <property type="nucleotide sequence ID" value="NC_009831.1"/>
</dbReference>
<dbReference type="SMR" id="A8FQ85"/>
<dbReference type="STRING" id="425104.Ssed_0395"/>
<dbReference type="KEGG" id="sse:Ssed_0395"/>
<dbReference type="eggNOG" id="COG0065">
    <property type="taxonomic scope" value="Bacteria"/>
</dbReference>
<dbReference type="HOGENOM" id="CLU_006714_3_4_6"/>
<dbReference type="OrthoDB" id="9802769at2"/>
<dbReference type="UniPathway" id="UPA00048">
    <property type="reaction ID" value="UER00071"/>
</dbReference>
<dbReference type="Proteomes" id="UP000002015">
    <property type="component" value="Chromosome"/>
</dbReference>
<dbReference type="GO" id="GO:0003861">
    <property type="term" value="F:3-isopropylmalate dehydratase activity"/>
    <property type="evidence" value="ECO:0007669"/>
    <property type="project" value="UniProtKB-UniRule"/>
</dbReference>
<dbReference type="GO" id="GO:0051539">
    <property type="term" value="F:4 iron, 4 sulfur cluster binding"/>
    <property type="evidence" value="ECO:0007669"/>
    <property type="project" value="UniProtKB-KW"/>
</dbReference>
<dbReference type="GO" id="GO:0046872">
    <property type="term" value="F:metal ion binding"/>
    <property type="evidence" value="ECO:0007669"/>
    <property type="project" value="UniProtKB-KW"/>
</dbReference>
<dbReference type="GO" id="GO:0009098">
    <property type="term" value="P:L-leucine biosynthetic process"/>
    <property type="evidence" value="ECO:0007669"/>
    <property type="project" value="UniProtKB-UniRule"/>
</dbReference>
<dbReference type="CDD" id="cd01583">
    <property type="entry name" value="IPMI"/>
    <property type="match status" value="1"/>
</dbReference>
<dbReference type="FunFam" id="3.30.499.10:FF:000006">
    <property type="entry name" value="3-isopropylmalate dehydratase large subunit"/>
    <property type="match status" value="1"/>
</dbReference>
<dbReference type="FunFam" id="3.30.499.10:FF:000007">
    <property type="entry name" value="3-isopropylmalate dehydratase large subunit"/>
    <property type="match status" value="1"/>
</dbReference>
<dbReference type="Gene3D" id="3.30.499.10">
    <property type="entry name" value="Aconitase, domain 3"/>
    <property type="match status" value="2"/>
</dbReference>
<dbReference type="HAMAP" id="MF_01026">
    <property type="entry name" value="LeuC_type1"/>
    <property type="match status" value="1"/>
</dbReference>
<dbReference type="InterPro" id="IPR004430">
    <property type="entry name" value="3-IsopropMal_deHydase_lsu"/>
</dbReference>
<dbReference type="InterPro" id="IPR015931">
    <property type="entry name" value="Acnase/IPM_dHydase_lsu_aba_1/3"/>
</dbReference>
<dbReference type="InterPro" id="IPR001030">
    <property type="entry name" value="Acoase/IPM_deHydtase_lsu_aba"/>
</dbReference>
<dbReference type="InterPro" id="IPR018136">
    <property type="entry name" value="Aconitase_4Fe-4S_BS"/>
</dbReference>
<dbReference type="InterPro" id="IPR036008">
    <property type="entry name" value="Aconitase_4Fe-4S_dom"/>
</dbReference>
<dbReference type="InterPro" id="IPR050067">
    <property type="entry name" value="IPM_dehydratase_rel_enz"/>
</dbReference>
<dbReference type="InterPro" id="IPR033941">
    <property type="entry name" value="IPMI_cat"/>
</dbReference>
<dbReference type="NCBIfam" id="TIGR00170">
    <property type="entry name" value="leuC"/>
    <property type="match status" value="1"/>
</dbReference>
<dbReference type="NCBIfam" id="NF004016">
    <property type="entry name" value="PRK05478.1"/>
    <property type="match status" value="1"/>
</dbReference>
<dbReference type="NCBIfam" id="NF009116">
    <property type="entry name" value="PRK12466.1"/>
    <property type="match status" value="1"/>
</dbReference>
<dbReference type="PANTHER" id="PTHR43822:SF9">
    <property type="entry name" value="3-ISOPROPYLMALATE DEHYDRATASE"/>
    <property type="match status" value="1"/>
</dbReference>
<dbReference type="PANTHER" id="PTHR43822">
    <property type="entry name" value="HOMOACONITASE, MITOCHONDRIAL-RELATED"/>
    <property type="match status" value="1"/>
</dbReference>
<dbReference type="Pfam" id="PF00330">
    <property type="entry name" value="Aconitase"/>
    <property type="match status" value="1"/>
</dbReference>
<dbReference type="PRINTS" id="PR00415">
    <property type="entry name" value="ACONITASE"/>
</dbReference>
<dbReference type="SUPFAM" id="SSF53732">
    <property type="entry name" value="Aconitase iron-sulfur domain"/>
    <property type="match status" value="1"/>
</dbReference>
<dbReference type="PROSITE" id="PS00450">
    <property type="entry name" value="ACONITASE_1"/>
    <property type="match status" value="1"/>
</dbReference>
<dbReference type="PROSITE" id="PS01244">
    <property type="entry name" value="ACONITASE_2"/>
    <property type="match status" value="1"/>
</dbReference>
<sequence>MAKTLYEKVWDSHVVVENEGQAPLIYVDRHLVHEVTSPQAFSGLKVAGRKLRAPEKTFATMDHNTSTKSASLDALSPMARIQVETLQDNCKEFGVRLYDIHHKNQGIVHVMGPELGITLPGTVIVCGDSHTATHGAFGALAFGIGTSEVEHVMATQTLRQNKAKTMKIEVRGHVAAGITAKDIVLAIIGKIGMDGGTGYVVEFCGEAIEALSMEGRMTVCNMAIEMGAKAGMVAPDGITAEYLKGREFAPKGESWEQAIAAWAELKTDEDAIFDASVVLEASDIAPQLTWGTNPGQVVAIDGLVPNPEDESNATVKASIEKALEYVALSAGTCMTDVSINKVFIGSCTNSRIEDLRDAALHAKGRKVAAGVTAIVVPGSGLVKEQAEAEGLDKIFLEAGFEWRLPGCSMCLAMNDDRLEAGDRCASTSNRNFEGRQGRGSRTHLVSPAMAAAAAVAGHFVDIRKAY</sequence>
<keyword id="KW-0004">4Fe-4S</keyword>
<keyword id="KW-0028">Amino-acid biosynthesis</keyword>
<keyword id="KW-0100">Branched-chain amino acid biosynthesis</keyword>
<keyword id="KW-0408">Iron</keyword>
<keyword id="KW-0411">Iron-sulfur</keyword>
<keyword id="KW-0432">Leucine biosynthesis</keyword>
<keyword id="KW-0456">Lyase</keyword>
<keyword id="KW-0479">Metal-binding</keyword>
<keyword id="KW-1185">Reference proteome</keyword>
<proteinExistence type="inferred from homology"/>
<reference key="1">
    <citation type="submission" date="2007-08" db="EMBL/GenBank/DDBJ databases">
        <title>Complete sequence of Shewanella sediminis HAW-EB3.</title>
        <authorList>
            <consortium name="US DOE Joint Genome Institute"/>
            <person name="Copeland A."/>
            <person name="Lucas S."/>
            <person name="Lapidus A."/>
            <person name="Barry K."/>
            <person name="Glavina del Rio T."/>
            <person name="Dalin E."/>
            <person name="Tice H."/>
            <person name="Pitluck S."/>
            <person name="Chertkov O."/>
            <person name="Brettin T."/>
            <person name="Bruce D."/>
            <person name="Detter J.C."/>
            <person name="Han C."/>
            <person name="Schmutz J."/>
            <person name="Larimer F."/>
            <person name="Land M."/>
            <person name="Hauser L."/>
            <person name="Kyrpides N."/>
            <person name="Kim E."/>
            <person name="Zhao J.-S."/>
            <person name="Richardson P."/>
        </authorList>
    </citation>
    <scope>NUCLEOTIDE SEQUENCE [LARGE SCALE GENOMIC DNA]</scope>
    <source>
        <strain>HAW-EB3</strain>
    </source>
</reference>
<organism>
    <name type="scientific">Shewanella sediminis (strain HAW-EB3)</name>
    <dbReference type="NCBI Taxonomy" id="425104"/>
    <lineage>
        <taxon>Bacteria</taxon>
        <taxon>Pseudomonadati</taxon>
        <taxon>Pseudomonadota</taxon>
        <taxon>Gammaproteobacteria</taxon>
        <taxon>Alteromonadales</taxon>
        <taxon>Shewanellaceae</taxon>
        <taxon>Shewanella</taxon>
    </lineage>
</organism>
<gene>
    <name evidence="1" type="primary">leuC</name>
    <name type="ordered locus">Ssed_0395</name>
</gene>
<name>LEUC_SHESH</name>
<comment type="function">
    <text evidence="1">Catalyzes the isomerization between 2-isopropylmalate and 3-isopropylmalate, via the formation of 2-isopropylmaleate.</text>
</comment>
<comment type="catalytic activity">
    <reaction evidence="1">
        <text>(2R,3S)-3-isopropylmalate = (2S)-2-isopropylmalate</text>
        <dbReference type="Rhea" id="RHEA:32287"/>
        <dbReference type="ChEBI" id="CHEBI:1178"/>
        <dbReference type="ChEBI" id="CHEBI:35121"/>
        <dbReference type="EC" id="4.2.1.33"/>
    </reaction>
</comment>
<comment type="cofactor">
    <cofactor evidence="1">
        <name>[4Fe-4S] cluster</name>
        <dbReference type="ChEBI" id="CHEBI:49883"/>
    </cofactor>
    <text evidence="1">Binds 1 [4Fe-4S] cluster per subunit.</text>
</comment>
<comment type="pathway">
    <text evidence="1">Amino-acid biosynthesis; L-leucine biosynthesis; L-leucine from 3-methyl-2-oxobutanoate: step 2/4.</text>
</comment>
<comment type="subunit">
    <text evidence="1">Heterodimer of LeuC and LeuD.</text>
</comment>
<comment type="similarity">
    <text evidence="1">Belongs to the aconitase/IPM isomerase family. LeuC type 1 subfamily.</text>
</comment>
<feature type="chain" id="PRO_1000084228" description="3-isopropylmalate dehydratase large subunit">
    <location>
        <begin position="1"/>
        <end position="466"/>
    </location>
</feature>
<feature type="binding site" evidence="1">
    <location>
        <position position="347"/>
    </location>
    <ligand>
        <name>[4Fe-4S] cluster</name>
        <dbReference type="ChEBI" id="CHEBI:49883"/>
    </ligand>
</feature>
<feature type="binding site" evidence="1">
    <location>
        <position position="407"/>
    </location>
    <ligand>
        <name>[4Fe-4S] cluster</name>
        <dbReference type="ChEBI" id="CHEBI:49883"/>
    </ligand>
</feature>
<feature type="binding site" evidence="1">
    <location>
        <position position="410"/>
    </location>
    <ligand>
        <name>[4Fe-4S] cluster</name>
        <dbReference type="ChEBI" id="CHEBI:49883"/>
    </ligand>
</feature>